<dbReference type="EMBL" id="AL928926">
    <property type="status" value="NOT_ANNOTATED_CDS"/>
    <property type="molecule type" value="Genomic_DNA"/>
</dbReference>
<dbReference type="EMBL" id="X12801">
    <property type="protein sequence ID" value="CAA31289.1"/>
    <property type="molecule type" value="mRNA"/>
</dbReference>
<dbReference type="EMBL" id="BC027791">
    <property type="protein sequence ID" value="AAH27791.1"/>
    <property type="molecule type" value="mRNA"/>
</dbReference>
<dbReference type="EMBL" id="AK011566">
    <property type="protein sequence ID" value="BAB27703.1"/>
    <property type="molecule type" value="mRNA"/>
</dbReference>
<dbReference type="CCDS" id="CCDS89463.1">
    <molecule id="P16546-1"/>
</dbReference>
<dbReference type="PIR" id="A43769">
    <property type="entry name" value="A43769"/>
</dbReference>
<dbReference type="PIR" id="PC7076">
    <property type="entry name" value="PC7076"/>
</dbReference>
<dbReference type="RefSeq" id="NP_001356254.1">
    <molecule id="P16546-1"/>
    <property type="nucleotide sequence ID" value="NM_001369325.1"/>
</dbReference>
<dbReference type="BMRB" id="P16546"/>
<dbReference type="SMR" id="P16546"/>
<dbReference type="CORUM" id="P16546"/>
<dbReference type="DIP" id="DIP-37712N"/>
<dbReference type="FunCoup" id="P16546">
    <property type="interactions" value="2339"/>
</dbReference>
<dbReference type="IntAct" id="P16546">
    <property type="interactions" value="34"/>
</dbReference>
<dbReference type="MINT" id="P16546"/>
<dbReference type="STRING" id="10090.ENSMUSP00000121116"/>
<dbReference type="GlyConnect" id="2738">
    <property type="glycosylation" value="2 N-Linked glycans (1 site)"/>
</dbReference>
<dbReference type="GlyCosmos" id="P16546">
    <property type="glycosylation" value="1 site, 2 glycans"/>
</dbReference>
<dbReference type="GlyGen" id="P16546">
    <property type="glycosylation" value="8 sites, 6 N-linked glycans (5 sites), 1 O-linked glycan (3 sites)"/>
</dbReference>
<dbReference type="iPTMnet" id="P16546"/>
<dbReference type="MetOSite" id="P16546"/>
<dbReference type="PhosphoSitePlus" id="P16546"/>
<dbReference type="SwissPalm" id="P16546"/>
<dbReference type="jPOST" id="P16546"/>
<dbReference type="PaxDb" id="10090-ENSMUSP00000097797"/>
<dbReference type="PeptideAtlas" id="P16546"/>
<dbReference type="ProteomicsDB" id="261580">
    <molecule id="P16546-1"/>
</dbReference>
<dbReference type="ProteomicsDB" id="261581">
    <molecule id="P16546-2"/>
</dbReference>
<dbReference type="Pumba" id="P16546"/>
<dbReference type="Antibodypedia" id="1910">
    <property type="antibodies" value="508 antibodies from 43 providers"/>
</dbReference>
<dbReference type="Ensembl" id="ENSMUST00000046257.14">
    <molecule id="P16546-2"/>
    <property type="protein sequence ID" value="ENSMUSP00000047792.8"/>
    <property type="gene ID" value="ENSMUSG00000057738.15"/>
</dbReference>
<dbReference type="Ensembl" id="ENSMUST00000095083.11">
    <molecule id="P16546-1"/>
    <property type="protein sequence ID" value="ENSMUSP00000092697.5"/>
    <property type="gene ID" value="ENSMUSG00000057738.15"/>
</dbReference>
<dbReference type="GeneID" id="20740"/>
<dbReference type="UCSC" id="uc008jat.1">
    <molecule id="P16546-1"/>
    <property type="organism name" value="mouse"/>
</dbReference>
<dbReference type="AGR" id="MGI:98386"/>
<dbReference type="MGI" id="MGI:98386">
    <property type="gene designation" value="Sptan1"/>
</dbReference>
<dbReference type="VEuPathDB" id="HostDB:ENSMUSG00000057738"/>
<dbReference type="eggNOG" id="KOG0040">
    <property type="taxonomic scope" value="Eukaryota"/>
</dbReference>
<dbReference type="GeneTree" id="ENSGT00940000156662"/>
<dbReference type="HOGENOM" id="CLU_000847_0_0_1"/>
<dbReference type="InParanoid" id="P16546"/>
<dbReference type="Reactome" id="R-MMU-264870">
    <property type="pathway name" value="Caspase-mediated cleavage of cytoskeletal proteins"/>
</dbReference>
<dbReference type="Reactome" id="R-MMU-375165">
    <property type="pathway name" value="NCAM signaling for neurite out-growth"/>
</dbReference>
<dbReference type="Reactome" id="R-MMU-445095">
    <property type="pathway name" value="Interaction between L1 and Ankyrins"/>
</dbReference>
<dbReference type="Reactome" id="R-MMU-5673001">
    <property type="pathway name" value="RAF/MAP kinase cascade"/>
</dbReference>
<dbReference type="Reactome" id="R-MMU-6798695">
    <property type="pathway name" value="Neutrophil degranulation"/>
</dbReference>
<dbReference type="Reactome" id="R-MMU-6807878">
    <property type="pathway name" value="COPI-mediated anterograde transport"/>
</dbReference>
<dbReference type="Reactome" id="R-MMU-9013420">
    <property type="pathway name" value="RHOU GTPase cycle"/>
</dbReference>
<dbReference type="Reactome" id="R-MMU-9013424">
    <property type="pathway name" value="RHOV GTPase cycle"/>
</dbReference>
<dbReference type="CD-CODE" id="CE726F99">
    <property type="entry name" value="Postsynaptic density"/>
</dbReference>
<dbReference type="ChiTaRS" id="Sptan1">
    <property type="organism name" value="mouse"/>
</dbReference>
<dbReference type="PRO" id="PR:P16546"/>
<dbReference type="Proteomes" id="UP000000589">
    <property type="component" value="Chromosome 2"/>
</dbReference>
<dbReference type="RNAct" id="P16546">
    <property type="molecule type" value="protein"/>
</dbReference>
<dbReference type="Bgee" id="ENSMUSG00000057738">
    <property type="expression patterns" value="Expressed in facial nucleus and 274 other cell types or tissues"/>
</dbReference>
<dbReference type="ExpressionAtlas" id="P16546">
    <property type="expression patterns" value="baseline and differential"/>
</dbReference>
<dbReference type="GO" id="GO:0030863">
    <property type="term" value="C:cortical cytoskeleton"/>
    <property type="evidence" value="ECO:0000314"/>
    <property type="project" value="MGI"/>
</dbReference>
<dbReference type="GO" id="GO:0032437">
    <property type="term" value="C:cuticular plate"/>
    <property type="evidence" value="ECO:0000314"/>
    <property type="project" value="MGI"/>
</dbReference>
<dbReference type="GO" id="GO:0005829">
    <property type="term" value="C:cytosol"/>
    <property type="evidence" value="ECO:0000304"/>
    <property type="project" value="Reactome"/>
</dbReference>
<dbReference type="GO" id="GO:0005916">
    <property type="term" value="C:fascia adherens"/>
    <property type="evidence" value="ECO:0000314"/>
    <property type="project" value="MGI"/>
</dbReference>
<dbReference type="GO" id="GO:0016328">
    <property type="term" value="C:lateral plasma membrane"/>
    <property type="evidence" value="ECO:0000314"/>
    <property type="project" value="MGI"/>
</dbReference>
<dbReference type="GO" id="GO:0016020">
    <property type="term" value="C:membrane"/>
    <property type="evidence" value="ECO:0000314"/>
    <property type="project" value="MGI"/>
</dbReference>
<dbReference type="GO" id="GO:0043209">
    <property type="term" value="C:myelin sheath"/>
    <property type="evidence" value="ECO:0007005"/>
    <property type="project" value="UniProtKB"/>
</dbReference>
<dbReference type="GO" id="GO:0033010">
    <property type="term" value="C:paranodal junction"/>
    <property type="evidence" value="ECO:0000314"/>
    <property type="project" value="MGI"/>
</dbReference>
<dbReference type="GO" id="GO:0033270">
    <property type="term" value="C:paranode region of axon"/>
    <property type="evidence" value="ECO:0000314"/>
    <property type="project" value="BHF-UCL"/>
</dbReference>
<dbReference type="GO" id="GO:0030018">
    <property type="term" value="C:Z disc"/>
    <property type="evidence" value="ECO:0000314"/>
    <property type="project" value="MGI"/>
</dbReference>
<dbReference type="GO" id="GO:0003779">
    <property type="term" value="F:actin binding"/>
    <property type="evidence" value="ECO:0007669"/>
    <property type="project" value="UniProtKB-KW"/>
</dbReference>
<dbReference type="GO" id="GO:0005509">
    <property type="term" value="F:calcium ion binding"/>
    <property type="evidence" value="ECO:0007669"/>
    <property type="project" value="InterPro"/>
</dbReference>
<dbReference type="GO" id="GO:0005516">
    <property type="term" value="F:calmodulin binding"/>
    <property type="evidence" value="ECO:0007669"/>
    <property type="project" value="UniProtKB-KW"/>
</dbReference>
<dbReference type="GO" id="GO:0030507">
    <property type="term" value="F:spectrin binding"/>
    <property type="evidence" value="ECO:0000314"/>
    <property type="project" value="MGI"/>
</dbReference>
<dbReference type="GO" id="GO:0051693">
    <property type="term" value="P:actin filament capping"/>
    <property type="evidence" value="ECO:0007669"/>
    <property type="project" value="UniProtKB-KW"/>
</dbReference>
<dbReference type="CDD" id="cd00051">
    <property type="entry name" value="EFh"/>
    <property type="match status" value="1"/>
</dbReference>
<dbReference type="CDD" id="cd11808">
    <property type="entry name" value="SH3_Alpha_Spectrin"/>
    <property type="match status" value="1"/>
</dbReference>
<dbReference type="CDD" id="cd00176">
    <property type="entry name" value="SPEC"/>
    <property type="match status" value="12"/>
</dbReference>
<dbReference type="FunFam" id="1.20.58.60:FF:000007">
    <property type="entry name" value="Spectrin alpha chain non-erythrocytic 1"/>
    <property type="match status" value="2"/>
</dbReference>
<dbReference type="FunFam" id="1.20.58.60:FF:000037">
    <property type="entry name" value="Spectrin alpha chain non-erythrocytic 1"/>
    <property type="match status" value="1"/>
</dbReference>
<dbReference type="FunFam" id="1.10.238.10:FF:000032">
    <property type="entry name" value="Spectrin alpha chain, non-erythrocytic 1"/>
    <property type="match status" value="1"/>
</dbReference>
<dbReference type="FunFam" id="1.20.5.170:FF:000014">
    <property type="entry name" value="Spectrin alpha chain, non-erythrocytic 1"/>
    <property type="match status" value="1"/>
</dbReference>
<dbReference type="FunFam" id="1.20.58.60:FF:000006">
    <property type="entry name" value="Spectrin alpha chain, non-erythrocytic 1"/>
    <property type="match status" value="3"/>
</dbReference>
<dbReference type="FunFam" id="1.20.58.60:FF:000013">
    <property type="entry name" value="Spectrin alpha chain, non-erythrocytic 1"/>
    <property type="match status" value="2"/>
</dbReference>
<dbReference type="FunFam" id="1.20.58.60:FF:000017">
    <property type="entry name" value="Spectrin alpha chain, non-erythrocytic 1"/>
    <property type="match status" value="1"/>
</dbReference>
<dbReference type="FunFam" id="1.20.58.60:FF:000020">
    <property type="entry name" value="Spectrin alpha chain, non-erythrocytic 1"/>
    <property type="match status" value="1"/>
</dbReference>
<dbReference type="FunFam" id="1.20.58.60:FF:000026">
    <property type="entry name" value="Spectrin alpha chain, non-erythrocytic 1"/>
    <property type="match status" value="2"/>
</dbReference>
<dbReference type="FunFam" id="1.20.58.60:FF:000035">
    <property type="entry name" value="Spectrin alpha chain, non-erythrocytic 1"/>
    <property type="match status" value="1"/>
</dbReference>
<dbReference type="FunFam" id="1.20.58.60:FF:000043">
    <property type="entry name" value="Spectrin alpha chain, non-erythrocytic 1"/>
    <property type="match status" value="1"/>
</dbReference>
<dbReference type="FunFam" id="1.20.58.60:FF:000046">
    <property type="entry name" value="Spectrin alpha chain, non-erythrocytic 1"/>
    <property type="match status" value="1"/>
</dbReference>
<dbReference type="FunFam" id="1.20.58.60:FF:000071">
    <property type="entry name" value="Spectrin alpha chain, non-erythrocytic 1"/>
    <property type="match status" value="1"/>
</dbReference>
<dbReference type="FunFam" id="1.20.58.60:FF:000078">
    <property type="entry name" value="Spectrin alpha chain, non-erythrocytic 1"/>
    <property type="match status" value="1"/>
</dbReference>
<dbReference type="FunFam" id="1.20.58.60:FF:000079">
    <property type="entry name" value="Spectrin alpha chain, non-erythrocytic 1"/>
    <property type="match status" value="1"/>
</dbReference>
<dbReference type="FunFam" id="1.20.58.60:FF:000080">
    <property type="entry name" value="Spectrin alpha chain, non-erythrocytic 1"/>
    <property type="match status" value="1"/>
</dbReference>
<dbReference type="FunFam" id="2.30.30.40:FF:000036">
    <property type="entry name" value="Spectrin alpha chain, non-erythrocytic 1"/>
    <property type="match status" value="1"/>
</dbReference>
<dbReference type="FunFam" id="1.10.238.10:FF:000020">
    <property type="entry name" value="spectrin alpha chain, non-erythrocytic 1"/>
    <property type="match status" value="1"/>
</dbReference>
<dbReference type="FunFam" id="1.20.58.60:FF:000100">
    <property type="entry name" value="spectrin alpha chain, non-erythrocytic 1 isoform X1"/>
    <property type="match status" value="1"/>
</dbReference>
<dbReference type="Gene3D" id="1.20.5.170">
    <property type="match status" value="1"/>
</dbReference>
<dbReference type="Gene3D" id="1.20.58.60">
    <property type="match status" value="20"/>
</dbReference>
<dbReference type="Gene3D" id="1.10.238.10">
    <property type="entry name" value="EF-hand"/>
    <property type="match status" value="2"/>
</dbReference>
<dbReference type="Gene3D" id="2.30.30.40">
    <property type="entry name" value="SH3 Domains"/>
    <property type="match status" value="1"/>
</dbReference>
<dbReference type="InterPro" id="IPR035825">
    <property type="entry name" value="Alpha_Spectrin_SH3"/>
</dbReference>
<dbReference type="InterPro" id="IPR011992">
    <property type="entry name" value="EF-hand-dom_pair"/>
</dbReference>
<dbReference type="InterPro" id="IPR014837">
    <property type="entry name" value="EF-hand_Ca_insen"/>
</dbReference>
<dbReference type="InterPro" id="IPR018247">
    <property type="entry name" value="EF_Hand_1_Ca_BS"/>
</dbReference>
<dbReference type="InterPro" id="IPR002048">
    <property type="entry name" value="EF_hand_dom"/>
</dbReference>
<dbReference type="InterPro" id="IPR036028">
    <property type="entry name" value="SH3-like_dom_sf"/>
</dbReference>
<dbReference type="InterPro" id="IPR001452">
    <property type="entry name" value="SH3_domain"/>
</dbReference>
<dbReference type="InterPro" id="IPR018159">
    <property type="entry name" value="Spectrin/alpha-actinin"/>
</dbReference>
<dbReference type="InterPro" id="IPR002017">
    <property type="entry name" value="Spectrin_repeat"/>
</dbReference>
<dbReference type="PANTHER" id="PTHR11915">
    <property type="entry name" value="SPECTRIN/FILAMIN RELATED CYTOSKELETAL PROTEIN"/>
    <property type="match status" value="1"/>
</dbReference>
<dbReference type="Pfam" id="PF13499">
    <property type="entry name" value="EF-hand_7"/>
    <property type="match status" value="1"/>
</dbReference>
<dbReference type="Pfam" id="PF08726">
    <property type="entry name" value="EFhand_Ca_insen"/>
    <property type="match status" value="1"/>
</dbReference>
<dbReference type="Pfam" id="PF00018">
    <property type="entry name" value="SH3_1"/>
    <property type="match status" value="1"/>
</dbReference>
<dbReference type="Pfam" id="PF00435">
    <property type="entry name" value="Spectrin"/>
    <property type="match status" value="20"/>
</dbReference>
<dbReference type="PRINTS" id="PR00452">
    <property type="entry name" value="SH3DOMAIN"/>
</dbReference>
<dbReference type="PRINTS" id="PR01887">
    <property type="entry name" value="SPECTRNALPHA"/>
</dbReference>
<dbReference type="SMART" id="SM00054">
    <property type="entry name" value="EFh"/>
    <property type="match status" value="2"/>
</dbReference>
<dbReference type="SMART" id="SM01184">
    <property type="entry name" value="efhand_Ca_insen"/>
    <property type="match status" value="1"/>
</dbReference>
<dbReference type="SMART" id="SM00326">
    <property type="entry name" value="SH3"/>
    <property type="match status" value="1"/>
</dbReference>
<dbReference type="SMART" id="SM00150">
    <property type="entry name" value="SPEC"/>
    <property type="match status" value="20"/>
</dbReference>
<dbReference type="SUPFAM" id="SSF47473">
    <property type="entry name" value="EF-hand"/>
    <property type="match status" value="1"/>
</dbReference>
<dbReference type="SUPFAM" id="SSF50044">
    <property type="entry name" value="SH3-domain"/>
    <property type="match status" value="1"/>
</dbReference>
<dbReference type="SUPFAM" id="SSF46966">
    <property type="entry name" value="Spectrin repeat"/>
    <property type="match status" value="14"/>
</dbReference>
<dbReference type="PROSITE" id="PS00018">
    <property type="entry name" value="EF_HAND_1"/>
    <property type="match status" value="2"/>
</dbReference>
<dbReference type="PROSITE" id="PS50222">
    <property type="entry name" value="EF_HAND_2"/>
    <property type="match status" value="3"/>
</dbReference>
<dbReference type="PROSITE" id="PS50002">
    <property type="entry name" value="SH3"/>
    <property type="match status" value="1"/>
</dbReference>
<feature type="chain" id="PRO_0000073456" description="Spectrin alpha chain, non-erythrocytic 1">
    <location>
        <begin position="1"/>
        <end position="2472"/>
    </location>
</feature>
<feature type="repeat" description="Spectrin 1" evidence="4">
    <location>
        <begin position="45"/>
        <end position="146"/>
    </location>
</feature>
<feature type="repeat" description="Spectrin 2" evidence="4">
    <location>
        <begin position="150"/>
        <end position="251"/>
    </location>
</feature>
<feature type="repeat" description="Spectrin 3" evidence="4">
    <location>
        <begin position="256"/>
        <end position="358"/>
    </location>
</feature>
<feature type="repeat" description="Spectrin 4" evidence="4">
    <location>
        <begin position="361"/>
        <end position="465"/>
    </location>
</feature>
<feature type="repeat" description="Spectrin 5" evidence="4">
    <location>
        <begin position="468"/>
        <end position="570"/>
    </location>
</feature>
<feature type="repeat" description="Spectrin 6" evidence="4">
    <location>
        <begin position="574"/>
        <end position="676"/>
    </location>
</feature>
<feature type="repeat" description="Spectrin 7" evidence="4">
    <location>
        <begin position="679"/>
        <end position="781"/>
    </location>
</feature>
<feature type="repeat" description="Spectrin 8" evidence="4">
    <location>
        <begin position="785"/>
        <end position="888"/>
    </location>
</feature>
<feature type="repeat" description="Spectrin 9" evidence="4">
    <location>
        <begin position="891"/>
        <end position="961"/>
    </location>
</feature>
<feature type="domain" description="SH3" evidence="5">
    <location>
        <begin position="967"/>
        <end position="1026"/>
    </location>
</feature>
<feature type="repeat" description="Spectrin 10" evidence="4">
    <location>
        <begin position="1096"/>
        <end position="1166"/>
    </location>
</feature>
<feature type="repeat" description="Spectrin 11" evidence="4">
    <location>
        <begin position="1233"/>
        <end position="1336"/>
    </location>
</feature>
<feature type="repeat" description="Spectrin 12" evidence="4">
    <location>
        <begin position="1339"/>
        <end position="1441"/>
    </location>
</feature>
<feature type="repeat" description="Spectrin 13" evidence="4">
    <location>
        <begin position="1446"/>
        <end position="1549"/>
    </location>
</feature>
<feature type="repeat" description="Spectrin 14" evidence="4">
    <location>
        <begin position="1552"/>
        <end position="1656"/>
    </location>
</feature>
<feature type="repeat" description="Spectrin 15" evidence="4">
    <location>
        <begin position="1659"/>
        <end position="1762"/>
    </location>
</feature>
<feature type="repeat" description="Spectrin 16" evidence="4">
    <location>
        <begin position="1764"/>
        <end position="1868"/>
    </location>
</feature>
<feature type="repeat" description="Spectrin 17" evidence="4">
    <location>
        <begin position="1871"/>
        <end position="1974"/>
    </location>
</feature>
<feature type="repeat" description="Spectrin 18" evidence="4">
    <location>
        <begin position="1978"/>
        <end position="2081"/>
    </location>
</feature>
<feature type="repeat" description="Spectrin 19" evidence="4">
    <location>
        <begin position="2092"/>
        <end position="2194"/>
    </location>
</feature>
<feature type="repeat" description="Spectrin 20" evidence="4">
    <location>
        <begin position="2206"/>
        <end position="2310"/>
    </location>
</feature>
<feature type="domain" description="EF-hand 1" evidence="6">
    <location>
        <begin position="2323"/>
        <end position="2358"/>
    </location>
</feature>
<feature type="domain" description="EF-hand 2" evidence="6">
    <location>
        <begin position="2366"/>
        <end position="2401"/>
    </location>
</feature>
<feature type="domain" description="EF-hand 3" evidence="6">
    <location>
        <begin position="2404"/>
        <end position="2439"/>
    </location>
</feature>
<feature type="binding site" evidence="6">
    <location>
        <position position="2336"/>
    </location>
    <ligand>
        <name>Ca(2+)</name>
        <dbReference type="ChEBI" id="CHEBI:29108"/>
        <label>1</label>
    </ligand>
</feature>
<feature type="binding site" evidence="6">
    <location>
        <position position="2338"/>
    </location>
    <ligand>
        <name>Ca(2+)</name>
        <dbReference type="ChEBI" id="CHEBI:29108"/>
        <label>1</label>
    </ligand>
</feature>
<feature type="binding site" evidence="6">
    <location>
        <position position="2340"/>
    </location>
    <ligand>
        <name>Ca(2+)</name>
        <dbReference type="ChEBI" id="CHEBI:29108"/>
        <label>1</label>
    </ligand>
</feature>
<feature type="binding site" evidence="6">
    <location>
        <position position="2342"/>
    </location>
    <ligand>
        <name>Ca(2+)</name>
        <dbReference type="ChEBI" id="CHEBI:29108"/>
        <label>1</label>
    </ligand>
</feature>
<feature type="binding site" evidence="6">
    <location>
        <position position="2347"/>
    </location>
    <ligand>
        <name>Ca(2+)</name>
        <dbReference type="ChEBI" id="CHEBI:29108"/>
        <label>1</label>
    </ligand>
</feature>
<feature type="binding site" evidence="6">
    <location>
        <position position="2379"/>
    </location>
    <ligand>
        <name>Ca(2+)</name>
        <dbReference type="ChEBI" id="CHEBI:29108"/>
        <label>2</label>
    </ligand>
</feature>
<feature type="binding site" evidence="6">
    <location>
        <position position="2381"/>
    </location>
    <ligand>
        <name>Ca(2+)</name>
        <dbReference type="ChEBI" id="CHEBI:29108"/>
        <label>2</label>
    </ligand>
</feature>
<feature type="binding site" evidence="6">
    <location>
        <position position="2383"/>
    </location>
    <ligand>
        <name>Ca(2+)</name>
        <dbReference type="ChEBI" id="CHEBI:29108"/>
        <label>2</label>
    </ligand>
</feature>
<feature type="binding site" evidence="6">
    <location>
        <position position="2385"/>
    </location>
    <ligand>
        <name>Ca(2+)</name>
        <dbReference type="ChEBI" id="CHEBI:29108"/>
        <label>2</label>
    </ligand>
</feature>
<feature type="binding site" evidence="6">
    <location>
        <position position="2390"/>
    </location>
    <ligand>
        <name>Ca(2+)</name>
        <dbReference type="ChEBI" id="CHEBI:29108"/>
        <label>2</label>
    </ligand>
</feature>
<feature type="site" description="Cleavage; by mu-calpain" evidence="1">
    <location>
        <begin position="1176"/>
        <end position="1177"/>
    </location>
</feature>
<feature type="modified residue" description="N-acetylmethionine" evidence="3">
    <location>
        <position position="1"/>
    </location>
</feature>
<feature type="modified residue" description="Phosphoserine" evidence="12">
    <location>
        <position position="587"/>
    </location>
</feature>
<feature type="modified residue" description="N6-acetyllysine" evidence="3">
    <location>
        <position position="637"/>
    </location>
</feature>
<feature type="modified residue" description="N6-acetyllysine" evidence="13">
    <location>
        <position position="803"/>
    </location>
</feature>
<feature type="modified residue" description="Phosphoserine" evidence="2">
    <location>
        <position position="924"/>
    </location>
</feature>
<feature type="modified residue" description="Phosphoserine" evidence="3">
    <location>
        <position position="982"/>
    </location>
</feature>
<feature type="modified residue" description="Phosphoserine" evidence="3">
    <location>
        <position position="999"/>
    </location>
</feature>
<feature type="modified residue" description="Phosphoserine" evidence="12">
    <location>
        <position position="1029"/>
    </location>
</feature>
<feature type="modified residue" description="Phosphoserine" evidence="12">
    <location>
        <position position="1031"/>
    </location>
</feature>
<feature type="modified residue" description="Phosphoserine" evidence="3">
    <location>
        <position position="1041"/>
    </location>
</feature>
<feature type="modified residue" description="Phosphotyrosine" evidence="3">
    <location>
        <position position="1176"/>
    </location>
</feature>
<feature type="modified residue" description="Phosphoserine" evidence="12">
    <location>
        <position position="1190"/>
    </location>
</feature>
<feature type="modified residue" description="Phosphoserine" evidence="3">
    <location>
        <position position="1207"/>
    </location>
</feature>
<feature type="modified residue" description="Phosphoserine" evidence="10 11 12">
    <location>
        <position position="1217"/>
    </location>
</feature>
<feature type="modified residue" description="Phosphoserine" evidence="12">
    <location>
        <position position="1291"/>
    </location>
</feature>
<feature type="modified residue" description="Phosphoserine" evidence="3">
    <location>
        <position position="1306"/>
    </location>
</feature>
<feature type="modified residue" description="Phosphoserine" evidence="12">
    <location>
        <position position="1323"/>
    </location>
</feature>
<feature type="modified residue" description="Phosphoserine" evidence="3">
    <location>
        <position position="1338"/>
    </location>
</feature>
<feature type="modified residue" description="N6-acetyllysine" evidence="3">
    <location>
        <position position="1519"/>
    </location>
</feature>
<feature type="modified residue" description="Phosphoserine" evidence="12">
    <location>
        <position position="1550"/>
    </location>
</feature>
<feature type="modified residue" description="Phosphoserine" evidence="3">
    <location>
        <position position="1557"/>
    </location>
</feature>
<feature type="modified residue" description="Phosphoserine" evidence="3">
    <location>
        <position position="1578"/>
    </location>
</feature>
<feature type="modified residue" description="Phosphoserine" evidence="3">
    <location>
        <position position="1615"/>
    </location>
</feature>
<feature type="modified residue" description="Phosphoserine" evidence="3">
    <location>
        <position position="1647"/>
    </location>
</feature>
<feature type="modified residue" description="Phosphothreonine" evidence="3">
    <location>
        <position position="2020"/>
    </location>
</feature>
<feature type="modified residue" description="N6-acetyllysine" evidence="3">
    <location>
        <position position="2052"/>
    </location>
</feature>
<feature type="modified residue" description="Phosphothreonine" evidence="12">
    <location>
        <position position="2066"/>
    </location>
</feature>
<feature type="modified residue" description="N6-acetyllysine" evidence="3">
    <location>
        <position position="2421"/>
    </location>
</feature>
<feature type="splice variant" id="VSP_022093" description="In isoform 2." evidence="7 8">
    <location>
        <begin position="1053"/>
        <end position="1072"/>
    </location>
</feature>
<feature type="sequence conflict" description="In Ref. 3; CAA31289." evidence="9" ref="3">
    <original>T</original>
    <variation>A</variation>
    <location>
        <position position="995"/>
    </location>
</feature>
<feature type="sequence conflict" description="In Ref. 3; CAA31289." evidence="9" ref="3">
    <original>D</original>
    <variation>G</variation>
    <location>
        <position position="1156"/>
    </location>
</feature>
<feature type="sequence conflict" description="In Ref. 3; CAA31289." evidence="9" ref="3">
    <original>T</original>
    <variation>S</variation>
    <location>
        <position position="1204"/>
    </location>
</feature>
<feature type="sequence conflict" description="In Ref. 3; CAA31289." evidence="9" ref="3">
    <original>E</original>
    <variation>D</variation>
    <location>
        <position position="1279"/>
    </location>
</feature>
<feature type="sequence conflict" description="In Ref. 3; CAA31289." evidence="9" ref="3">
    <original>Q</original>
    <variation>P</variation>
    <location>
        <position position="1396"/>
    </location>
</feature>
<feature type="sequence conflict" description="In Ref. 6; BAB27703." evidence="9" ref="6">
    <original>A</original>
    <variation>S</variation>
    <location>
        <position position="1819"/>
    </location>
</feature>
<evidence type="ECO:0000250" key="1"/>
<evidence type="ECO:0000250" key="2">
    <source>
        <dbReference type="UniProtKB" id="P16086"/>
    </source>
</evidence>
<evidence type="ECO:0000250" key="3">
    <source>
        <dbReference type="UniProtKB" id="Q13813"/>
    </source>
</evidence>
<evidence type="ECO:0000255" key="4"/>
<evidence type="ECO:0000255" key="5">
    <source>
        <dbReference type="PROSITE-ProRule" id="PRU00192"/>
    </source>
</evidence>
<evidence type="ECO:0000255" key="6">
    <source>
        <dbReference type="PROSITE-ProRule" id="PRU00448"/>
    </source>
</evidence>
<evidence type="ECO:0000303" key="7">
    <source>
    </source>
</evidence>
<evidence type="ECO:0000303" key="8">
    <source>
    </source>
</evidence>
<evidence type="ECO:0000305" key="9"/>
<evidence type="ECO:0007744" key="10">
    <source>
    </source>
</evidence>
<evidence type="ECO:0007744" key="11">
    <source>
    </source>
</evidence>
<evidence type="ECO:0007744" key="12">
    <source>
    </source>
</evidence>
<evidence type="ECO:0007744" key="13">
    <source>
    </source>
</evidence>
<accession>P16546</accession>
<accession>A3KGU6</accession>
<accession>A3KGU8</accession>
<accession>Q8K380</accession>
<accession>Q9CT05</accession>
<keyword id="KW-0007">Acetylation</keyword>
<keyword id="KW-0117">Actin capping</keyword>
<keyword id="KW-0009">Actin-binding</keyword>
<keyword id="KW-0025">Alternative splicing</keyword>
<keyword id="KW-0106">Calcium</keyword>
<keyword id="KW-0112">Calmodulin-binding</keyword>
<keyword id="KW-0963">Cytoplasm</keyword>
<keyword id="KW-0206">Cytoskeleton</keyword>
<keyword id="KW-0903">Direct protein sequencing</keyword>
<keyword id="KW-0479">Metal-binding</keyword>
<keyword id="KW-0597">Phosphoprotein</keyword>
<keyword id="KW-1185">Reference proteome</keyword>
<keyword id="KW-0677">Repeat</keyword>
<keyword id="KW-0728">SH3 domain</keyword>
<comment type="function">
    <text>Fodrin, which seems to be involved in secretion, interacts with calmodulin in a calcium-dependent manner and is thus candidate for the calcium-dependent movement of the cytoskeleton at the membrane.</text>
</comment>
<comment type="subunit">
    <text evidence="1 3">Like erythrocyte spectrin, the spectrin-like proteins are capable of forming dimers which can further associate to tetramers. Interacts (via C-terminal spectrin repeats) with TRPC4. Interacts with CALM and EMD. Interacts with isoform 1 of ACP1. Identified in a complex with ACTN4, CASK, IQGAP1, MAGI2, NPHS1 and SPTBN1. Interacts with SHANK3 (via ANK repeats) (By similarity). Interacts with CLN3; this interaction regulates the fodrin localization at the plasma membrane (By similarity).</text>
</comment>
<comment type="interaction">
    <interactant intactId="EBI-911063">
        <id>P16546</id>
    </interactant>
    <interactant intactId="EBI-6691266">
        <id>Q5I1X5</id>
        <label>Ppp1r13l</label>
    </interactant>
    <organismsDiffer>false</organismsDiffer>
    <experiments>2</experiments>
</comment>
<comment type="subcellular location">
    <subcellularLocation>
        <location>Cytoplasm</location>
        <location>Cytoskeleton</location>
    </subcellularLocation>
    <subcellularLocation>
        <location>Cytoplasm</location>
        <location>Cell cortex</location>
    </subcellularLocation>
    <text evidence="1">Expressed along the cell membrane in podocytes and presumptive tubule cells during glomerulogenesis and is expressed along lateral cell margins in tubule cells.</text>
</comment>
<comment type="alternative products">
    <event type="alternative splicing"/>
    <isoform>
        <id>P16546-1</id>
        <name>1</name>
        <sequence type="displayed"/>
    </isoform>
    <isoform>
        <id>P16546-2</id>
        <name>2</name>
        <sequence type="described" ref="VSP_022093"/>
    </isoform>
</comment>
<comment type="PTM">
    <text evidence="1">Phosphorylation of Tyr-1176 decreases sensitivity to cleavage by calpain in vitro.</text>
</comment>
<comment type="similarity">
    <text evidence="9">Belongs to the spectrin family.</text>
</comment>
<sequence>MDPSGVKVLETAEDIQERRQQVLDRYHRFKELSTLRRQKLEDSYRFQFFQRDAEELEKWIQEKLQVASDENYKDPTNLQGKLQKHQAFEAEVQANSGAIVKLDETGNLMISEGHFASETIRTRLMELHRQWELLLEKMREKGIKLLQAQKLVQYLRECEDVMDWINDKEAIVTSEELGQDLEHVEVLQKKFEEFQTDLAAHEERVNEVSQFAAKLIQEQHPEEELIKTKQDEVNAAWQRLKGLALQRQGKLFGAAEVQRFNRDVDETIGWIKEKEQLMASDDFGRDLASVQALLRKHEGLERDLAALEDKVKALCAEADRLQQSHPLSASQIQVKREELITNWEQIRTLAAERHARLDDSYRLQRFLADFRDLTSWVTEMKALINADELANDVAGAEALLDRHQEHKGEIDAHEDSFKSADESGQALLAASHYASDEVREKLSILSEERTALLELWELRRQQYEQCMDLQLFYRDTEQVDNWMSKQEAFLLNEDLGDSLDSVEALLKKHEDFEKSLSAQEEKITALDEFATKLIQNNHYAMEDVATRRDALLSRRNALHERAMHRRAQLADSFHLQQFFRDSDELKSWVNEKMKTATDEAYKDPSNLQGKVQKHQAFEAELSANQSRIDALEKAGQKLIDVNHYAKEEVAARMNEVISLWKKLLEATELKGIKLREANQQQQFNRNVEDIELWLYEVEGHLASDDYGKDLTNVQNLQKKHALLEADVAAHQDRIDGITIQARQFQDAGHFDAENIKKKQEALVARYEALKEPMVARKQKLADSLRLQQLFRDVEDEETWIREKEPIAASTNRGKDLIGVQNLLKKHQALQAEIAGHEPRIKAVTQKGNAMVEEGHFAAEDVKAKLSELNQKWEALKAKASQRRQDLEDSLQAQQYFADANEAESWMREKEPIVGSTDYGKDEDSAEALLKKHEALMSDLSAYGSSIQALREQAQSCRQQVAPMDDETGKELVLALYDYQEKSPREVTMKKGDILTLLNSTNKDWWKVEVNDRQGFVPAAYVKKLDPAQSASRENLLEEQGSIALRQGQIDNQTRITKEAGSVSLRMKQVEELYQSLLELGEKRKGMLEKSCKKFMLFREANELQQWITEKEAALTNEEVGADLEQVEVLQKKFDDFQKDLKANESRLKDINKVAEDLESEGLMAEEVQAVQQQEVYGAMPRDEADSKTASPWKSARLMVHTVATFNSIKELNERWRSLQQLAEERSQLLGSAHEVQRFHRDADETKEWIEEKNQALNTDNYGHDLASVQALQRKHEGFERDLAALGDKVNSLGETAQRLIQSHPESAEDLKEKCTELNQAWTSLGKRADQRKAKLGDSHDLQRFLSDFRDLMSWINGIRGLVSSDELAKDVTGAEALLERHQEHRTEIDARAGTFQAFEQFGQQLLAHGHYASPEIKEKLDILDQERTDLEKAWVQRRMMLDHCLELQLFHRDCEQAENWMAAREAFLNTEDKGDSLDSVEALIKKHEDFDKAINVQEEKIAALQAFADQLIAVDHYAKGDIANRRNEVLDRWRRLKAQMIEKRSKLGESQTLQQFSRDVDEIEAWISEKLQTASDESYKDPTNIQSKHQKHQAFEAELHANADRIRGVIDMGNSLIERGACAGSEDAVKARLAALADQWQFLVQKSAEKSQKLKEANKQQNFNTGIKDFDFWLSEVEALLASEDYGKDLASVNNLLKKHQLLEADISAHEDRLKDLNSQADSLMTSSAFDTSQVKEKRDTINGRFQKIKSMATSRRAKLSESHRLHQFFRDMDDEESWIKEKKLLVSSEDYGRDLTGVQNLRKKHKRLEAELAAHEPAIQGVLDTGKKLSDDNTIGQEEIQQRLAQFVEHWKELKQLAAARGQRLEESLEYQQFVANVEEEEAWINEKMTLVASEDYGDTLAAIQGLLKKHEAFETDFTVHKDRVNDVCTNGQDLIKKNNHHEENISSKMKGLNGKVSDLEKAAAQRKAKLDENSAFLQFNWKADVVESWIGEKENSLKTDDYGRDLSSVQTLLTKQETFDAGLQAFQQEGIANITALKDQLLAAKHIQSKAIEARHASLMKRWTQLLANSATRKKKLLEAQSHFRKVEDLFLTFAKKASAFNSWFENAEEDLTDPVRCNSLEEIKALREAHDAFRSSLSSAQADFNQLAELDRQIKSFRVASNPYTWFTMEALEETWRNLQKIIKERELELQKEQRRQEENDKLRQEFAQHANAFHQWIQETRTYLLDGSCMVEESGTLESQLEATKRKHQEIRAMRSQLKKIEDLGAAMEEALILDNKYTEHSTVGLAQQWDQLDQLGMRMQHNLEQQIQARNTTGVTEEALKEFSMMFKHFDKDKSGRLNHQEFKSCLRSLGYDLPMVEEGEPDPEFEAILDTVDPNRDGHVSLQEYMAFMISRETENVKSSEEIESAFRALSSEGKPYVTKEELYQNLTREQADYCVSHMKPYVDGKGRELPTAFDYVEFTRSLFVN</sequence>
<organism>
    <name type="scientific">Mus musculus</name>
    <name type="common">Mouse</name>
    <dbReference type="NCBI Taxonomy" id="10090"/>
    <lineage>
        <taxon>Eukaryota</taxon>
        <taxon>Metazoa</taxon>
        <taxon>Chordata</taxon>
        <taxon>Craniata</taxon>
        <taxon>Vertebrata</taxon>
        <taxon>Euteleostomi</taxon>
        <taxon>Mammalia</taxon>
        <taxon>Eutheria</taxon>
        <taxon>Euarchontoglires</taxon>
        <taxon>Glires</taxon>
        <taxon>Rodentia</taxon>
        <taxon>Myomorpha</taxon>
        <taxon>Muroidea</taxon>
        <taxon>Muridae</taxon>
        <taxon>Murinae</taxon>
        <taxon>Mus</taxon>
        <taxon>Mus</taxon>
    </lineage>
</organism>
<proteinExistence type="evidence at protein level"/>
<protein>
    <recommendedName>
        <fullName>Spectrin alpha chain, non-erythrocytic 1</fullName>
    </recommendedName>
    <alternativeName>
        <fullName>Alpha-II spectrin</fullName>
    </alternativeName>
    <alternativeName>
        <fullName>Fodrin alpha chain</fullName>
    </alternativeName>
</protein>
<reference key="1">
    <citation type="journal article" date="2009" name="PLoS Biol.">
        <title>Lineage-specific biology revealed by a finished genome assembly of the mouse.</title>
        <authorList>
            <person name="Church D.M."/>
            <person name="Goodstadt L."/>
            <person name="Hillier L.W."/>
            <person name="Zody M.C."/>
            <person name="Goldstein S."/>
            <person name="She X."/>
            <person name="Bult C.J."/>
            <person name="Agarwala R."/>
            <person name="Cherry J.L."/>
            <person name="DiCuccio M."/>
            <person name="Hlavina W."/>
            <person name="Kapustin Y."/>
            <person name="Meric P."/>
            <person name="Maglott D."/>
            <person name="Birtle Z."/>
            <person name="Marques A.C."/>
            <person name="Graves T."/>
            <person name="Zhou S."/>
            <person name="Teague B."/>
            <person name="Potamousis K."/>
            <person name="Churas C."/>
            <person name="Place M."/>
            <person name="Herschleb J."/>
            <person name="Runnheim R."/>
            <person name="Forrest D."/>
            <person name="Amos-Landgraf J."/>
            <person name="Schwartz D.C."/>
            <person name="Cheng Z."/>
            <person name="Lindblad-Toh K."/>
            <person name="Eichler E.E."/>
            <person name="Ponting C.P."/>
        </authorList>
    </citation>
    <scope>NUCLEOTIDE SEQUENCE [LARGE SCALE GENOMIC DNA]</scope>
    <source>
        <strain>C57BL/6J</strain>
    </source>
</reference>
<reference key="2">
    <citation type="submission" date="2009-01" db="UniProtKB">
        <authorList>
            <person name="Lubec G."/>
            <person name="Sunyer B."/>
            <person name="Chen W.-Q."/>
        </authorList>
    </citation>
    <scope>PROTEIN SEQUENCE OF 8-18; 46-51; 64-81; 85-121; 130-137; 169-227; 251-259; 263-272; 275-295; 321-347; 382-402; 419-439; 442-459; 523-547; 614-627; 686-708; 734-742; 792-801; 813-839; 847-862; 908-930; 990-1002; 1013-1022; 1068-1082; 1197-1209; 1253-1273; 1314-1326; 1350-1359; 1370-1380; 1418-1427; 1501-1519; 1547-1570; 1592-1605; 1608-1619; 1700-1713; 1716-1736; 1772-1781; 1784-1794; 1808-1828; 1830-1844; 1866-1923; 1926-1938; 1985-1995; 2018-2040; 2065-2075; 2088-2098; 2138-2155; 2265-2281; 2354-2382; 2405-2435 AND 2455-2467</scope>
    <scope>IDENTIFICATION BY MASS SPECTROMETRY</scope>
    <source>
        <strain>OF1</strain>
        <tissue>Hippocampus</tissue>
    </source>
</reference>
<reference key="3">
    <citation type="journal article" date="1990" name="Biochimie">
        <title>Identification of the calmodulin binding domain of alpha-fodrin and implications for folding.</title>
        <authorList>
            <person name="Sri Widada J."/>
            <person name="Asselin J."/>
            <person name="Colote S."/>
            <person name="Ferraz C."/>
            <person name="Trave G."/>
            <person name="Afshar M."/>
            <person name="Haiech J."/>
            <person name="Liautard J.-P."/>
        </authorList>
    </citation>
    <scope>NUCLEOTIDE SEQUENCE [MRNA] OF 995-1396 (ISOFORM 2)</scope>
    <source>
        <tissue>Macrophage</tissue>
    </source>
</reference>
<reference key="4">
    <citation type="journal article" date="1989" name="J. Mol. Biol.">
        <title>Cloning and deletion mutagenesis using direct protein-protein interaction on an expression vector. Identification of the calmodulin binding domain of alpha-fodrin.</title>
        <authorList>
            <person name="Sri Widada J."/>
            <person name="Asselin J."/>
            <person name="Colote S."/>
            <person name="Marti J."/>
            <person name="Ferraz C."/>
            <person name="Trave G."/>
            <person name="Haiech J."/>
            <person name="Liautard J.-P."/>
        </authorList>
    </citation>
    <scope>NUCLEOTIDE SEQUENCE [MRNA] OF 995-1396 (ISOFORM 2)</scope>
</reference>
<reference key="5">
    <citation type="journal article" date="2004" name="Genome Res.">
        <title>The status, quality, and expansion of the NIH full-length cDNA project: the Mammalian Gene Collection (MGC).</title>
        <authorList>
            <consortium name="The MGC Project Team"/>
        </authorList>
    </citation>
    <scope>NUCLEOTIDE SEQUENCE [LARGE SCALE MRNA] OF 1118-2472</scope>
</reference>
<reference key="6">
    <citation type="journal article" date="2005" name="Science">
        <title>The transcriptional landscape of the mammalian genome.</title>
        <authorList>
            <person name="Carninci P."/>
            <person name="Kasukawa T."/>
            <person name="Katayama S."/>
            <person name="Gough J."/>
            <person name="Frith M.C."/>
            <person name="Maeda N."/>
            <person name="Oyama R."/>
            <person name="Ravasi T."/>
            <person name="Lenhard B."/>
            <person name="Wells C."/>
            <person name="Kodzius R."/>
            <person name="Shimokawa K."/>
            <person name="Bajic V.B."/>
            <person name="Brenner S.E."/>
            <person name="Batalov S."/>
            <person name="Forrest A.R."/>
            <person name="Zavolan M."/>
            <person name="Davis M.J."/>
            <person name="Wilming L.G."/>
            <person name="Aidinis V."/>
            <person name="Allen J.E."/>
            <person name="Ambesi-Impiombato A."/>
            <person name="Apweiler R."/>
            <person name="Aturaliya R.N."/>
            <person name="Bailey T.L."/>
            <person name="Bansal M."/>
            <person name="Baxter L."/>
            <person name="Beisel K.W."/>
            <person name="Bersano T."/>
            <person name="Bono H."/>
            <person name="Chalk A.M."/>
            <person name="Chiu K.P."/>
            <person name="Choudhary V."/>
            <person name="Christoffels A."/>
            <person name="Clutterbuck D.R."/>
            <person name="Crowe M.L."/>
            <person name="Dalla E."/>
            <person name="Dalrymple B.P."/>
            <person name="de Bono B."/>
            <person name="Della Gatta G."/>
            <person name="di Bernardo D."/>
            <person name="Down T."/>
            <person name="Engstrom P."/>
            <person name="Fagiolini M."/>
            <person name="Faulkner G."/>
            <person name="Fletcher C.F."/>
            <person name="Fukushima T."/>
            <person name="Furuno M."/>
            <person name="Futaki S."/>
            <person name="Gariboldi M."/>
            <person name="Georgii-Hemming P."/>
            <person name="Gingeras T.R."/>
            <person name="Gojobori T."/>
            <person name="Green R.E."/>
            <person name="Gustincich S."/>
            <person name="Harbers M."/>
            <person name="Hayashi Y."/>
            <person name="Hensch T.K."/>
            <person name="Hirokawa N."/>
            <person name="Hill D."/>
            <person name="Huminiecki L."/>
            <person name="Iacono M."/>
            <person name="Ikeo K."/>
            <person name="Iwama A."/>
            <person name="Ishikawa T."/>
            <person name="Jakt M."/>
            <person name="Kanapin A."/>
            <person name="Katoh M."/>
            <person name="Kawasawa Y."/>
            <person name="Kelso J."/>
            <person name="Kitamura H."/>
            <person name="Kitano H."/>
            <person name="Kollias G."/>
            <person name="Krishnan S.P."/>
            <person name="Kruger A."/>
            <person name="Kummerfeld S.K."/>
            <person name="Kurochkin I.V."/>
            <person name="Lareau L.F."/>
            <person name="Lazarevic D."/>
            <person name="Lipovich L."/>
            <person name="Liu J."/>
            <person name="Liuni S."/>
            <person name="McWilliam S."/>
            <person name="Madan Babu M."/>
            <person name="Madera M."/>
            <person name="Marchionni L."/>
            <person name="Matsuda H."/>
            <person name="Matsuzawa S."/>
            <person name="Miki H."/>
            <person name="Mignone F."/>
            <person name="Miyake S."/>
            <person name="Morris K."/>
            <person name="Mottagui-Tabar S."/>
            <person name="Mulder N."/>
            <person name="Nakano N."/>
            <person name="Nakauchi H."/>
            <person name="Ng P."/>
            <person name="Nilsson R."/>
            <person name="Nishiguchi S."/>
            <person name="Nishikawa S."/>
            <person name="Nori F."/>
            <person name="Ohara O."/>
            <person name="Okazaki Y."/>
            <person name="Orlando V."/>
            <person name="Pang K.C."/>
            <person name="Pavan W.J."/>
            <person name="Pavesi G."/>
            <person name="Pesole G."/>
            <person name="Petrovsky N."/>
            <person name="Piazza S."/>
            <person name="Reed J."/>
            <person name="Reid J.F."/>
            <person name="Ring B.Z."/>
            <person name="Ringwald M."/>
            <person name="Rost B."/>
            <person name="Ruan Y."/>
            <person name="Salzberg S.L."/>
            <person name="Sandelin A."/>
            <person name="Schneider C."/>
            <person name="Schoenbach C."/>
            <person name="Sekiguchi K."/>
            <person name="Semple C.A."/>
            <person name="Seno S."/>
            <person name="Sessa L."/>
            <person name="Sheng Y."/>
            <person name="Shibata Y."/>
            <person name="Shimada H."/>
            <person name="Shimada K."/>
            <person name="Silva D."/>
            <person name="Sinclair B."/>
            <person name="Sperling S."/>
            <person name="Stupka E."/>
            <person name="Sugiura K."/>
            <person name="Sultana R."/>
            <person name="Takenaka Y."/>
            <person name="Taki K."/>
            <person name="Tammoja K."/>
            <person name="Tan S.L."/>
            <person name="Tang S."/>
            <person name="Taylor M.S."/>
            <person name="Tegner J."/>
            <person name="Teichmann S.A."/>
            <person name="Ueda H.R."/>
            <person name="van Nimwegen E."/>
            <person name="Verardo R."/>
            <person name="Wei C.L."/>
            <person name="Yagi K."/>
            <person name="Yamanishi H."/>
            <person name="Zabarovsky E."/>
            <person name="Zhu S."/>
            <person name="Zimmer A."/>
            <person name="Hide W."/>
            <person name="Bult C."/>
            <person name="Grimmond S.M."/>
            <person name="Teasdale R.D."/>
            <person name="Liu E.T."/>
            <person name="Brusic V."/>
            <person name="Quackenbush J."/>
            <person name="Wahlestedt C."/>
            <person name="Mattick J.S."/>
            <person name="Hume D.A."/>
            <person name="Kai C."/>
            <person name="Sasaki D."/>
            <person name="Tomaru Y."/>
            <person name="Fukuda S."/>
            <person name="Kanamori-Katayama M."/>
            <person name="Suzuki M."/>
            <person name="Aoki J."/>
            <person name="Arakawa T."/>
            <person name="Iida J."/>
            <person name="Imamura K."/>
            <person name="Itoh M."/>
            <person name="Kato T."/>
            <person name="Kawaji H."/>
            <person name="Kawagashira N."/>
            <person name="Kawashima T."/>
            <person name="Kojima M."/>
            <person name="Kondo S."/>
            <person name="Konno H."/>
            <person name="Nakano K."/>
            <person name="Ninomiya N."/>
            <person name="Nishio T."/>
            <person name="Okada M."/>
            <person name="Plessy C."/>
            <person name="Shibata K."/>
            <person name="Shiraki T."/>
            <person name="Suzuki S."/>
            <person name="Tagami M."/>
            <person name="Waki K."/>
            <person name="Watahiki A."/>
            <person name="Okamura-Oho Y."/>
            <person name="Suzuki H."/>
            <person name="Kawai J."/>
            <person name="Hayashizaki Y."/>
        </authorList>
    </citation>
    <scope>NUCLEOTIDE SEQUENCE [LARGE SCALE MRNA] OF 1819-2472</scope>
    <source>
        <strain>C57BL/6J</strain>
        <tissue>Embryo</tissue>
    </source>
</reference>
<reference key="7">
    <citation type="journal article" date="2000" name="Electrophoresis">
        <title>Proteome analysis of mouse brain: two-dimensional electrophoresis profiles of tissue proteins during the course of aging.</title>
        <authorList>
            <person name="Tsugita A."/>
            <person name="Kawakami T."/>
            <person name="Uchida T."/>
            <person name="Sakai T."/>
            <person name="Kamo M."/>
            <person name="Matsui T."/>
            <person name="Watanabe Y."/>
            <person name="Morimasa T."/>
            <person name="Hosokawa K."/>
            <person name="Toda T."/>
        </authorList>
    </citation>
    <scope>PROTEIN SEQUENCE OF 2071-2079</scope>
    <source>
        <strain>C57BL/6Cr</strain>
        <tissue>Brain</tissue>
    </source>
</reference>
<reference key="8">
    <citation type="journal article" date="2006" name="Mol. Cell. Proteomics">
        <title>Comprehensive identification of phosphorylation sites in postsynaptic density preparations.</title>
        <authorList>
            <person name="Trinidad J.C."/>
            <person name="Specht C.G."/>
            <person name="Thalhammer A."/>
            <person name="Schoepfer R."/>
            <person name="Burlingame A.L."/>
        </authorList>
    </citation>
    <scope>PHOSPHORYLATION [LARGE SCALE ANALYSIS] AT SER-1217</scope>
    <scope>IDENTIFICATION BY MASS SPECTROMETRY [LARGE SCALE ANALYSIS]</scope>
    <source>
        <tissue>Brain</tissue>
    </source>
</reference>
<reference key="9">
    <citation type="journal article" date="2007" name="Mol. Cell. Proteomics">
        <title>Qualitative and quantitative analyses of protein phosphorylation in naive and stimulated mouse synaptosomal preparations.</title>
        <authorList>
            <person name="Munton R.P."/>
            <person name="Tweedie-Cullen R."/>
            <person name="Livingstone-Zatchej M."/>
            <person name="Weinandy F."/>
            <person name="Waidelich M."/>
            <person name="Longo D."/>
            <person name="Gehrig P."/>
            <person name="Potthast F."/>
            <person name="Rutishauser D."/>
            <person name="Gerrits B."/>
            <person name="Panse C."/>
            <person name="Schlapbach R."/>
            <person name="Mansuy I.M."/>
        </authorList>
    </citation>
    <scope>IDENTIFICATION BY MASS SPECTROMETRY [LARGE SCALE ANALYSIS]</scope>
    <source>
        <tissue>Brain cortex</tissue>
    </source>
</reference>
<reference key="10">
    <citation type="journal article" date="2007" name="Proc. Natl. Acad. Sci. U.S.A.">
        <title>Large-scale phosphorylation analysis of mouse liver.</title>
        <authorList>
            <person name="Villen J."/>
            <person name="Beausoleil S.A."/>
            <person name="Gerber S.A."/>
            <person name="Gygi S.P."/>
        </authorList>
    </citation>
    <scope>PHOSPHORYLATION [LARGE SCALE ANALYSIS] AT SER-1217</scope>
    <scope>IDENTIFICATION BY MASS SPECTROMETRY [LARGE SCALE ANALYSIS]</scope>
    <source>
        <tissue>Liver</tissue>
    </source>
</reference>
<reference key="11">
    <citation type="journal article" date="2010" name="Cell">
        <title>A tissue-specific atlas of mouse protein phosphorylation and expression.</title>
        <authorList>
            <person name="Huttlin E.L."/>
            <person name="Jedrychowski M.P."/>
            <person name="Elias J.E."/>
            <person name="Goswami T."/>
            <person name="Rad R."/>
            <person name="Beausoleil S.A."/>
            <person name="Villen J."/>
            <person name="Haas W."/>
            <person name="Sowa M.E."/>
            <person name="Gygi S.P."/>
        </authorList>
    </citation>
    <scope>PHOSPHORYLATION [LARGE SCALE ANALYSIS] AT SER-587; SER-1029; SER-1031; SER-1190; SER-1217; SER-1291; SER-1323; SER-1550 AND THR-2066</scope>
    <scope>IDENTIFICATION BY MASS SPECTROMETRY [LARGE SCALE ANALYSIS]</scope>
    <source>
        <tissue>Brain</tissue>
        <tissue>Brown adipose tissue</tissue>
        <tissue>Heart</tissue>
        <tissue>Kidney</tissue>
        <tissue>Liver</tissue>
        <tissue>Lung</tissue>
        <tissue>Pancreas</tissue>
        <tissue>Spleen</tissue>
        <tissue>Testis</tissue>
    </source>
</reference>
<reference key="12">
    <citation type="journal article" date="2013" name="Mol. Cell">
        <title>SIRT5-mediated lysine desuccinylation impacts diverse metabolic pathways.</title>
        <authorList>
            <person name="Park J."/>
            <person name="Chen Y."/>
            <person name="Tishkoff D.X."/>
            <person name="Peng C."/>
            <person name="Tan M."/>
            <person name="Dai L."/>
            <person name="Xie Z."/>
            <person name="Zhang Y."/>
            <person name="Zwaans B.M."/>
            <person name="Skinner M.E."/>
            <person name="Lombard D.B."/>
            <person name="Zhao Y."/>
        </authorList>
    </citation>
    <scope>ACETYLATION [LARGE SCALE ANALYSIS] AT LYS-803</scope>
    <scope>IDENTIFICATION BY MASS SPECTROMETRY [LARGE SCALE ANALYSIS]</scope>
    <source>
        <tissue>Embryonic fibroblast</tissue>
    </source>
</reference>
<gene>
    <name type="primary">Sptan1</name>
    <name type="synonym">Spna2</name>
    <name type="synonym">Spta2</name>
</gene>
<name>SPTN1_MOUSE</name>